<reference key="1">
    <citation type="submission" date="2006-12" db="EMBL/GenBank/DDBJ databases">
        <title>Complete sequence of chromosome 2 of Paracoccus denitrificans PD1222.</title>
        <authorList>
            <person name="Copeland A."/>
            <person name="Lucas S."/>
            <person name="Lapidus A."/>
            <person name="Barry K."/>
            <person name="Detter J.C."/>
            <person name="Glavina del Rio T."/>
            <person name="Hammon N."/>
            <person name="Israni S."/>
            <person name="Dalin E."/>
            <person name="Tice H."/>
            <person name="Pitluck S."/>
            <person name="Munk A.C."/>
            <person name="Brettin T."/>
            <person name="Bruce D."/>
            <person name="Han C."/>
            <person name="Tapia R."/>
            <person name="Gilna P."/>
            <person name="Schmutz J."/>
            <person name="Larimer F."/>
            <person name="Land M."/>
            <person name="Hauser L."/>
            <person name="Kyrpides N."/>
            <person name="Lykidis A."/>
            <person name="Spiro S."/>
            <person name="Richardson D.J."/>
            <person name="Moir J.W.B."/>
            <person name="Ferguson S.J."/>
            <person name="van Spanning R.J.M."/>
            <person name="Richardson P."/>
        </authorList>
    </citation>
    <scope>NUCLEOTIDE SEQUENCE [LARGE SCALE GENOMIC DNA]</scope>
    <source>
        <strain>Pd 1222</strain>
    </source>
</reference>
<comment type="function">
    <text evidence="1">Provides the (R)-glutamate required for cell wall biosynthesis.</text>
</comment>
<comment type="catalytic activity">
    <reaction evidence="1">
        <text>L-glutamate = D-glutamate</text>
        <dbReference type="Rhea" id="RHEA:12813"/>
        <dbReference type="ChEBI" id="CHEBI:29985"/>
        <dbReference type="ChEBI" id="CHEBI:29986"/>
        <dbReference type="EC" id="5.1.1.3"/>
    </reaction>
</comment>
<comment type="pathway">
    <text evidence="1">Cell wall biogenesis; peptidoglycan biosynthesis.</text>
</comment>
<comment type="similarity">
    <text evidence="1">Belongs to the aspartate/glutamate racemases family.</text>
</comment>
<dbReference type="EC" id="5.1.1.3" evidence="1"/>
<dbReference type="EMBL" id="CP000490">
    <property type="protein sequence ID" value="ABL72039.1"/>
    <property type="molecule type" value="Genomic_DNA"/>
</dbReference>
<dbReference type="RefSeq" id="WP_011750207.1">
    <property type="nucleotide sequence ID" value="NC_008687.1"/>
</dbReference>
<dbReference type="SMR" id="A1B945"/>
<dbReference type="STRING" id="318586.Pden_3973"/>
<dbReference type="EnsemblBacteria" id="ABL72039">
    <property type="protein sequence ID" value="ABL72039"/>
    <property type="gene ID" value="Pden_3973"/>
</dbReference>
<dbReference type="GeneID" id="93453634"/>
<dbReference type="KEGG" id="pde:Pden_3973"/>
<dbReference type="eggNOG" id="COG0796">
    <property type="taxonomic scope" value="Bacteria"/>
</dbReference>
<dbReference type="HOGENOM" id="CLU_052344_0_3_5"/>
<dbReference type="OrthoDB" id="9801055at2"/>
<dbReference type="UniPathway" id="UPA00219"/>
<dbReference type="Proteomes" id="UP000000361">
    <property type="component" value="Chromosome 2"/>
</dbReference>
<dbReference type="GO" id="GO:0008881">
    <property type="term" value="F:glutamate racemase activity"/>
    <property type="evidence" value="ECO:0007669"/>
    <property type="project" value="UniProtKB-UniRule"/>
</dbReference>
<dbReference type="GO" id="GO:0071555">
    <property type="term" value="P:cell wall organization"/>
    <property type="evidence" value="ECO:0007669"/>
    <property type="project" value="UniProtKB-KW"/>
</dbReference>
<dbReference type="GO" id="GO:0009252">
    <property type="term" value="P:peptidoglycan biosynthetic process"/>
    <property type="evidence" value="ECO:0007669"/>
    <property type="project" value="UniProtKB-UniRule"/>
</dbReference>
<dbReference type="GO" id="GO:0008360">
    <property type="term" value="P:regulation of cell shape"/>
    <property type="evidence" value="ECO:0007669"/>
    <property type="project" value="UniProtKB-KW"/>
</dbReference>
<dbReference type="Gene3D" id="3.40.50.1860">
    <property type="match status" value="2"/>
</dbReference>
<dbReference type="HAMAP" id="MF_00258">
    <property type="entry name" value="Glu_racemase"/>
    <property type="match status" value="1"/>
</dbReference>
<dbReference type="InterPro" id="IPR015942">
    <property type="entry name" value="Asp/Glu/hydantoin_racemase"/>
</dbReference>
<dbReference type="InterPro" id="IPR001920">
    <property type="entry name" value="Asp/Glu_race"/>
</dbReference>
<dbReference type="InterPro" id="IPR018187">
    <property type="entry name" value="Asp/Glu_racemase_AS_1"/>
</dbReference>
<dbReference type="InterPro" id="IPR004391">
    <property type="entry name" value="Glu_race"/>
</dbReference>
<dbReference type="PANTHER" id="PTHR21198">
    <property type="entry name" value="GLUTAMATE RACEMASE"/>
    <property type="match status" value="1"/>
</dbReference>
<dbReference type="PANTHER" id="PTHR21198:SF2">
    <property type="entry name" value="GLUTAMATE RACEMASE"/>
    <property type="match status" value="1"/>
</dbReference>
<dbReference type="Pfam" id="PF01177">
    <property type="entry name" value="Asp_Glu_race"/>
    <property type="match status" value="1"/>
</dbReference>
<dbReference type="SUPFAM" id="SSF53681">
    <property type="entry name" value="Aspartate/glutamate racemase"/>
    <property type="match status" value="2"/>
</dbReference>
<dbReference type="PROSITE" id="PS00923">
    <property type="entry name" value="ASP_GLU_RACEMASE_1"/>
    <property type="match status" value="1"/>
</dbReference>
<sequence>MAVGVFDSGLGGLTVLSAIAARMPDLPLVYLGDNAHTPYGVRDADDIFDLTCAGVERLWAEGCDLVILACNTASAAALKRMQETWLPKDKRVLGVFVPMIEALTERRWGDNSPPREVAVKHVALFATPATVASRAFQRELAFRAIGVDVEAQPCGGVVDAIEMGDEILAEALVTSHVEALLRRMPHPEAAILGCTHYPLVQAAFQKALGPQVTVYSQPNLVAESLEDYLGRHPEMLGAGNVSRFLTTGDPERVSGKATQFLRHPIRFESA</sequence>
<proteinExistence type="inferred from homology"/>
<accession>A1B945</accession>
<protein>
    <recommendedName>
        <fullName evidence="1">Glutamate racemase</fullName>
        <ecNumber evidence="1">5.1.1.3</ecNumber>
    </recommendedName>
</protein>
<keyword id="KW-0133">Cell shape</keyword>
<keyword id="KW-0961">Cell wall biogenesis/degradation</keyword>
<keyword id="KW-0413">Isomerase</keyword>
<keyword id="KW-0573">Peptidoglycan synthesis</keyword>
<keyword id="KW-1185">Reference proteome</keyword>
<name>MURI_PARDP</name>
<gene>
    <name evidence="1" type="primary">murI</name>
    <name type="ordered locus">Pden_3973</name>
</gene>
<evidence type="ECO:0000255" key="1">
    <source>
        <dbReference type="HAMAP-Rule" id="MF_00258"/>
    </source>
</evidence>
<feature type="chain" id="PRO_1000078563" description="Glutamate racemase">
    <location>
        <begin position="1"/>
        <end position="270"/>
    </location>
</feature>
<feature type="active site" description="Proton donor/acceptor" evidence="1">
    <location>
        <position position="70"/>
    </location>
</feature>
<feature type="active site" description="Proton donor/acceptor" evidence="1">
    <location>
        <position position="194"/>
    </location>
</feature>
<feature type="binding site" evidence="1">
    <location>
        <begin position="7"/>
        <end position="8"/>
    </location>
    <ligand>
        <name>substrate</name>
    </ligand>
</feature>
<feature type="binding site" evidence="1">
    <location>
        <begin position="39"/>
        <end position="40"/>
    </location>
    <ligand>
        <name>substrate</name>
    </ligand>
</feature>
<feature type="binding site" evidence="1">
    <location>
        <begin position="71"/>
        <end position="72"/>
    </location>
    <ligand>
        <name>substrate</name>
    </ligand>
</feature>
<feature type="binding site" evidence="1">
    <location>
        <begin position="195"/>
        <end position="196"/>
    </location>
    <ligand>
        <name>substrate</name>
    </ligand>
</feature>
<organism>
    <name type="scientific">Paracoccus denitrificans (strain Pd 1222)</name>
    <dbReference type="NCBI Taxonomy" id="318586"/>
    <lineage>
        <taxon>Bacteria</taxon>
        <taxon>Pseudomonadati</taxon>
        <taxon>Pseudomonadota</taxon>
        <taxon>Alphaproteobacteria</taxon>
        <taxon>Rhodobacterales</taxon>
        <taxon>Paracoccaceae</taxon>
        <taxon>Paracoccus</taxon>
    </lineage>
</organism>